<name>SYS_BACAC</name>
<proteinExistence type="inferred from homology"/>
<sequence length="424" mass="48744">MLDIKFLRTNFEEVKAKLQHRGEDLTDFGRFEELDTRRRELLVQTEELKSKRNEVSQQISVLKREKKDAEALILEMREVGEKVKDLDNELRTVEEDLERLMLSIPNIPHESAPVGETEDDNVVARTWGEVKEFAFEPKPHWDLATDLGILDFERAGKVTGSRFVFYKGAGARLERALISFMLDLHTDEHGYEEVLPPYMVNRASMTGTGQLPKFEEDAFRIESEDYFLIPTAEVPVTNMHRDEILNKEQLPIRYAAFSSCFRSEAGSAGRDTRGLIRQHQFNKVELVKFVKPEDSYEELEKLTNDAERVLQLLELPYRVMSMCTGDLGFTAAKKYDIEVWIPSYGTYREISSCSNFEAFQARRANIRFRREPNGKPEHVHTLNGSGLAIGRTVAAILENYQQEDGTIIIPEVLRPYMGGKTVIK</sequence>
<reference key="1">
    <citation type="submission" date="2008-10" db="EMBL/GenBank/DDBJ databases">
        <title>Genome sequence of Bacillus anthracis str. CDC 684.</title>
        <authorList>
            <person name="Dodson R.J."/>
            <person name="Munk A.C."/>
            <person name="Brettin T."/>
            <person name="Bruce D."/>
            <person name="Detter C."/>
            <person name="Tapia R."/>
            <person name="Han C."/>
            <person name="Sutton G."/>
            <person name="Sims D."/>
        </authorList>
    </citation>
    <scope>NUCLEOTIDE SEQUENCE [LARGE SCALE GENOMIC DNA]</scope>
    <source>
        <strain>CDC 684 / NRRL 3495</strain>
    </source>
</reference>
<organism>
    <name type="scientific">Bacillus anthracis (strain CDC 684 / NRRL 3495)</name>
    <dbReference type="NCBI Taxonomy" id="568206"/>
    <lineage>
        <taxon>Bacteria</taxon>
        <taxon>Bacillati</taxon>
        <taxon>Bacillota</taxon>
        <taxon>Bacilli</taxon>
        <taxon>Bacillales</taxon>
        <taxon>Bacillaceae</taxon>
        <taxon>Bacillus</taxon>
        <taxon>Bacillus cereus group</taxon>
    </lineage>
</organism>
<protein>
    <recommendedName>
        <fullName evidence="1">Serine--tRNA ligase</fullName>
        <ecNumber evidence="1">6.1.1.11</ecNumber>
    </recommendedName>
    <alternativeName>
        <fullName evidence="1">Seryl-tRNA synthetase</fullName>
        <shortName evidence="1">SerRS</shortName>
    </alternativeName>
    <alternativeName>
        <fullName evidence="1">Seryl-tRNA(Ser/Sec) synthetase</fullName>
    </alternativeName>
</protein>
<gene>
    <name evidence="1" type="primary">serS</name>
    <name type="ordered locus">BAMEG_0018</name>
</gene>
<accession>C3LIY9</accession>
<dbReference type="EC" id="6.1.1.11" evidence="1"/>
<dbReference type="EMBL" id="CP001215">
    <property type="protein sequence ID" value="ACP14618.1"/>
    <property type="molecule type" value="Genomic_DNA"/>
</dbReference>
<dbReference type="RefSeq" id="WP_000884181.1">
    <property type="nucleotide sequence ID" value="NC_012581.1"/>
</dbReference>
<dbReference type="SMR" id="C3LIY9"/>
<dbReference type="GeneID" id="69534454"/>
<dbReference type="KEGG" id="bah:BAMEG_0018"/>
<dbReference type="HOGENOM" id="CLU_023797_1_1_9"/>
<dbReference type="UniPathway" id="UPA00906">
    <property type="reaction ID" value="UER00895"/>
</dbReference>
<dbReference type="GO" id="GO:0005737">
    <property type="term" value="C:cytoplasm"/>
    <property type="evidence" value="ECO:0007669"/>
    <property type="project" value="UniProtKB-SubCell"/>
</dbReference>
<dbReference type="GO" id="GO:0005524">
    <property type="term" value="F:ATP binding"/>
    <property type="evidence" value="ECO:0007669"/>
    <property type="project" value="UniProtKB-UniRule"/>
</dbReference>
<dbReference type="GO" id="GO:0140096">
    <property type="term" value="F:catalytic activity, acting on a protein"/>
    <property type="evidence" value="ECO:0007669"/>
    <property type="project" value="UniProtKB-ARBA"/>
</dbReference>
<dbReference type="GO" id="GO:0004828">
    <property type="term" value="F:serine-tRNA ligase activity"/>
    <property type="evidence" value="ECO:0007669"/>
    <property type="project" value="UniProtKB-UniRule"/>
</dbReference>
<dbReference type="GO" id="GO:0016740">
    <property type="term" value="F:transferase activity"/>
    <property type="evidence" value="ECO:0007669"/>
    <property type="project" value="UniProtKB-ARBA"/>
</dbReference>
<dbReference type="GO" id="GO:0016260">
    <property type="term" value="P:selenocysteine biosynthetic process"/>
    <property type="evidence" value="ECO:0007669"/>
    <property type="project" value="UniProtKB-UniRule"/>
</dbReference>
<dbReference type="GO" id="GO:0006434">
    <property type="term" value="P:seryl-tRNA aminoacylation"/>
    <property type="evidence" value="ECO:0007669"/>
    <property type="project" value="UniProtKB-UniRule"/>
</dbReference>
<dbReference type="CDD" id="cd00770">
    <property type="entry name" value="SerRS_core"/>
    <property type="match status" value="1"/>
</dbReference>
<dbReference type="Gene3D" id="3.30.930.10">
    <property type="entry name" value="Bira Bifunctional Protein, Domain 2"/>
    <property type="match status" value="1"/>
</dbReference>
<dbReference type="Gene3D" id="1.10.287.40">
    <property type="entry name" value="Serine-tRNA synthetase, tRNA binding domain"/>
    <property type="match status" value="1"/>
</dbReference>
<dbReference type="HAMAP" id="MF_00176">
    <property type="entry name" value="Ser_tRNA_synth_type1"/>
    <property type="match status" value="1"/>
</dbReference>
<dbReference type="InterPro" id="IPR002314">
    <property type="entry name" value="aa-tRNA-synt_IIb"/>
</dbReference>
<dbReference type="InterPro" id="IPR006195">
    <property type="entry name" value="aa-tRNA-synth_II"/>
</dbReference>
<dbReference type="InterPro" id="IPR045864">
    <property type="entry name" value="aa-tRNA-synth_II/BPL/LPL"/>
</dbReference>
<dbReference type="InterPro" id="IPR002317">
    <property type="entry name" value="Ser-tRNA-ligase_type_1"/>
</dbReference>
<dbReference type="InterPro" id="IPR015866">
    <property type="entry name" value="Ser-tRNA-synth_1_N"/>
</dbReference>
<dbReference type="InterPro" id="IPR042103">
    <property type="entry name" value="SerRS_1_N_sf"/>
</dbReference>
<dbReference type="InterPro" id="IPR033729">
    <property type="entry name" value="SerRS_core"/>
</dbReference>
<dbReference type="InterPro" id="IPR010978">
    <property type="entry name" value="tRNA-bd_arm"/>
</dbReference>
<dbReference type="NCBIfam" id="TIGR00414">
    <property type="entry name" value="serS"/>
    <property type="match status" value="1"/>
</dbReference>
<dbReference type="PANTHER" id="PTHR43697:SF1">
    <property type="entry name" value="SERINE--TRNA LIGASE"/>
    <property type="match status" value="1"/>
</dbReference>
<dbReference type="PANTHER" id="PTHR43697">
    <property type="entry name" value="SERYL-TRNA SYNTHETASE"/>
    <property type="match status" value="1"/>
</dbReference>
<dbReference type="Pfam" id="PF02403">
    <property type="entry name" value="Seryl_tRNA_N"/>
    <property type="match status" value="1"/>
</dbReference>
<dbReference type="Pfam" id="PF00587">
    <property type="entry name" value="tRNA-synt_2b"/>
    <property type="match status" value="1"/>
</dbReference>
<dbReference type="PIRSF" id="PIRSF001529">
    <property type="entry name" value="Ser-tRNA-synth_IIa"/>
    <property type="match status" value="1"/>
</dbReference>
<dbReference type="PRINTS" id="PR00981">
    <property type="entry name" value="TRNASYNTHSER"/>
</dbReference>
<dbReference type="SUPFAM" id="SSF55681">
    <property type="entry name" value="Class II aaRS and biotin synthetases"/>
    <property type="match status" value="1"/>
</dbReference>
<dbReference type="SUPFAM" id="SSF46589">
    <property type="entry name" value="tRNA-binding arm"/>
    <property type="match status" value="1"/>
</dbReference>
<dbReference type="PROSITE" id="PS50862">
    <property type="entry name" value="AA_TRNA_LIGASE_II"/>
    <property type="match status" value="1"/>
</dbReference>
<keyword id="KW-0030">Aminoacyl-tRNA synthetase</keyword>
<keyword id="KW-0067">ATP-binding</keyword>
<keyword id="KW-0963">Cytoplasm</keyword>
<keyword id="KW-0436">Ligase</keyword>
<keyword id="KW-0547">Nucleotide-binding</keyword>
<keyword id="KW-0648">Protein biosynthesis</keyword>
<comment type="function">
    <text evidence="1">Catalyzes the attachment of serine to tRNA(Ser). Is also able to aminoacylate tRNA(Sec) with serine, to form the misacylated tRNA L-seryl-tRNA(Sec), which will be further converted into selenocysteinyl-tRNA(Sec).</text>
</comment>
<comment type="catalytic activity">
    <reaction evidence="1">
        <text>tRNA(Ser) + L-serine + ATP = L-seryl-tRNA(Ser) + AMP + diphosphate + H(+)</text>
        <dbReference type="Rhea" id="RHEA:12292"/>
        <dbReference type="Rhea" id="RHEA-COMP:9669"/>
        <dbReference type="Rhea" id="RHEA-COMP:9703"/>
        <dbReference type="ChEBI" id="CHEBI:15378"/>
        <dbReference type="ChEBI" id="CHEBI:30616"/>
        <dbReference type="ChEBI" id="CHEBI:33019"/>
        <dbReference type="ChEBI" id="CHEBI:33384"/>
        <dbReference type="ChEBI" id="CHEBI:78442"/>
        <dbReference type="ChEBI" id="CHEBI:78533"/>
        <dbReference type="ChEBI" id="CHEBI:456215"/>
        <dbReference type="EC" id="6.1.1.11"/>
    </reaction>
</comment>
<comment type="catalytic activity">
    <reaction evidence="1">
        <text>tRNA(Sec) + L-serine + ATP = L-seryl-tRNA(Sec) + AMP + diphosphate + H(+)</text>
        <dbReference type="Rhea" id="RHEA:42580"/>
        <dbReference type="Rhea" id="RHEA-COMP:9742"/>
        <dbReference type="Rhea" id="RHEA-COMP:10128"/>
        <dbReference type="ChEBI" id="CHEBI:15378"/>
        <dbReference type="ChEBI" id="CHEBI:30616"/>
        <dbReference type="ChEBI" id="CHEBI:33019"/>
        <dbReference type="ChEBI" id="CHEBI:33384"/>
        <dbReference type="ChEBI" id="CHEBI:78442"/>
        <dbReference type="ChEBI" id="CHEBI:78533"/>
        <dbReference type="ChEBI" id="CHEBI:456215"/>
        <dbReference type="EC" id="6.1.1.11"/>
    </reaction>
</comment>
<comment type="pathway">
    <text evidence="1">Aminoacyl-tRNA biosynthesis; selenocysteinyl-tRNA(Sec) biosynthesis; L-seryl-tRNA(Sec) from L-serine and tRNA(Sec): step 1/1.</text>
</comment>
<comment type="subunit">
    <text evidence="1">Homodimer. The tRNA molecule binds across the dimer.</text>
</comment>
<comment type="subcellular location">
    <subcellularLocation>
        <location evidence="1">Cytoplasm</location>
    </subcellularLocation>
</comment>
<comment type="domain">
    <text evidence="1">Consists of two distinct domains, a catalytic core and a N-terminal extension that is involved in tRNA binding.</text>
</comment>
<comment type="similarity">
    <text evidence="1">Belongs to the class-II aminoacyl-tRNA synthetase family. Type-1 seryl-tRNA synthetase subfamily.</text>
</comment>
<evidence type="ECO:0000255" key="1">
    <source>
        <dbReference type="HAMAP-Rule" id="MF_00176"/>
    </source>
</evidence>
<feature type="chain" id="PRO_1000123868" description="Serine--tRNA ligase">
    <location>
        <begin position="1"/>
        <end position="424"/>
    </location>
</feature>
<feature type="binding site" evidence="1">
    <location>
        <begin position="231"/>
        <end position="233"/>
    </location>
    <ligand>
        <name>L-serine</name>
        <dbReference type="ChEBI" id="CHEBI:33384"/>
    </ligand>
</feature>
<feature type="binding site" evidence="1">
    <location>
        <begin position="262"/>
        <end position="264"/>
    </location>
    <ligand>
        <name>ATP</name>
        <dbReference type="ChEBI" id="CHEBI:30616"/>
    </ligand>
</feature>
<feature type="binding site" evidence="1">
    <location>
        <position position="285"/>
    </location>
    <ligand>
        <name>L-serine</name>
        <dbReference type="ChEBI" id="CHEBI:33384"/>
    </ligand>
</feature>
<feature type="binding site" evidence="1">
    <location>
        <begin position="349"/>
        <end position="352"/>
    </location>
    <ligand>
        <name>ATP</name>
        <dbReference type="ChEBI" id="CHEBI:30616"/>
    </ligand>
</feature>
<feature type="binding site" evidence="1">
    <location>
        <position position="385"/>
    </location>
    <ligand>
        <name>L-serine</name>
        <dbReference type="ChEBI" id="CHEBI:33384"/>
    </ligand>
</feature>